<organism>
    <name type="scientific">Streptomyces coelicolor (strain ATCC BAA-471 / A3(2) / M145)</name>
    <dbReference type="NCBI Taxonomy" id="100226"/>
    <lineage>
        <taxon>Bacteria</taxon>
        <taxon>Bacillati</taxon>
        <taxon>Actinomycetota</taxon>
        <taxon>Actinomycetes</taxon>
        <taxon>Kitasatosporales</taxon>
        <taxon>Streptomycetaceae</taxon>
        <taxon>Streptomyces</taxon>
        <taxon>Streptomyces albidoflavus group</taxon>
    </lineage>
</organism>
<proteinExistence type="evidence at protein level"/>
<comment type="similarity">
    <text evidence="1">Belongs to the UPF0309 family.</text>
</comment>
<gene>
    <name type="ordered locus">SCO4393</name>
    <name type="ORF">SCD10.25c</name>
</gene>
<sequence>MSDHKPAGQFLDAAIDLLRRVRDEEADSIEAAGTLLADTVQNGGRLFAFGAGHSSLAAQDVVYRAGGLALMNLLTVPGVVGIDVMPATLGSALERVDGLASAVLDSSPLRAGDALVIISLSGRNALPVEMAMHARALGLRVIGVTSVAYASQTTSRHASGTFLKDHCDIVLDSKIAVGDAELTLDTVPAPFAPASTVVTAALMQAVTATAAATLADRGIEPPLLRSGNVDGGHEWNARVLEQYGERIFYRR</sequence>
<name>Y4393_STRCO</name>
<feature type="chain" id="PRO_0000068186" description="UPF0309 protein SCO4393">
    <location>
        <begin position="1"/>
        <end position="251"/>
    </location>
</feature>
<feature type="domain" description="SIS" evidence="1">
    <location>
        <begin position="36"/>
        <end position="220"/>
    </location>
</feature>
<protein>
    <recommendedName>
        <fullName evidence="1">UPF0309 protein SCO4393</fullName>
    </recommendedName>
</protein>
<keyword id="KW-0002">3D-structure</keyword>
<keyword id="KW-1185">Reference proteome</keyword>
<evidence type="ECO:0000255" key="1">
    <source>
        <dbReference type="HAMAP-Rule" id="MF_01240"/>
    </source>
</evidence>
<accession>Q9K3V1</accession>
<reference key="1">
    <citation type="journal article" date="2002" name="Nature">
        <title>Complete genome sequence of the model actinomycete Streptomyces coelicolor A3(2).</title>
        <authorList>
            <person name="Bentley S.D."/>
            <person name="Chater K.F."/>
            <person name="Cerdeno-Tarraga A.-M."/>
            <person name="Challis G.L."/>
            <person name="Thomson N.R."/>
            <person name="James K.D."/>
            <person name="Harris D.E."/>
            <person name="Quail M.A."/>
            <person name="Kieser H."/>
            <person name="Harper D."/>
            <person name="Bateman A."/>
            <person name="Brown S."/>
            <person name="Chandra G."/>
            <person name="Chen C.W."/>
            <person name="Collins M."/>
            <person name="Cronin A."/>
            <person name="Fraser A."/>
            <person name="Goble A."/>
            <person name="Hidalgo J."/>
            <person name="Hornsby T."/>
            <person name="Howarth S."/>
            <person name="Huang C.-H."/>
            <person name="Kieser T."/>
            <person name="Larke L."/>
            <person name="Murphy L.D."/>
            <person name="Oliver K."/>
            <person name="O'Neil S."/>
            <person name="Rabbinowitsch E."/>
            <person name="Rajandream M.A."/>
            <person name="Rutherford K.M."/>
            <person name="Rutter S."/>
            <person name="Seeger K."/>
            <person name="Saunders D."/>
            <person name="Sharp S."/>
            <person name="Squares R."/>
            <person name="Squares S."/>
            <person name="Taylor K."/>
            <person name="Warren T."/>
            <person name="Wietzorrek A."/>
            <person name="Woodward J.R."/>
            <person name="Barrell B.G."/>
            <person name="Parkhill J."/>
            <person name="Hopwood D.A."/>
        </authorList>
    </citation>
    <scope>NUCLEOTIDE SEQUENCE [LARGE SCALE GENOMIC DNA]</scope>
    <source>
        <strain>ATCC BAA-471 / A3(2) / M145</strain>
    </source>
</reference>
<dbReference type="EMBL" id="AL939119">
    <property type="protein sequence ID" value="CAB95904.1"/>
    <property type="molecule type" value="Genomic_DNA"/>
</dbReference>
<dbReference type="RefSeq" id="NP_628562.1">
    <property type="nucleotide sequence ID" value="NC_003888.3"/>
</dbReference>
<dbReference type="RefSeq" id="WP_003974589.1">
    <property type="nucleotide sequence ID" value="NZ_VNID01000017.1"/>
</dbReference>
<dbReference type="PDB" id="9EOL">
    <property type="method" value="X-ray"/>
    <property type="resolution" value="1.69 A"/>
    <property type="chains" value="A/B=1-251"/>
</dbReference>
<dbReference type="PDB" id="9F7O">
    <property type="method" value="X-ray"/>
    <property type="resolution" value="2.30 A"/>
    <property type="chains" value="A/B=1-251"/>
</dbReference>
<dbReference type="PDB" id="9F7V">
    <property type="method" value="X-ray"/>
    <property type="resolution" value="2.59 A"/>
    <property type="chains" value="A/B=1-251"/>
</dbReference>
<dbReference type="PDBsum" id="9EOL"/>
<dbReference type="PDBsum" id="9F7O"/>
<dbReference type="PDBsum" id="9F7V"/>
<dbReference type="SMR" id="Q9K3V1"/>
<dbReference type="STRING" id="100226.gene:17762038"/>
<dbReference type="PaxDb" id="100226-SCO4393"/>
<dbReference type="KEGG" id="sco:SCO4393"/>
<dbReference type="PATRIC" id="fig|100226.15.peg.4461"/>
<dbReference type="eggNOG" id="COG4821">
    <property type="taxonomic scope" value="Bacteria"/>
</dbReference>
<dbReference type="HOGENOM" id="CLU_089975_0_0_11"/>
<dbReference type="InParanoid" id="Q9K3V1"/>
<dbReference type="OrthoDB" id="9805185at2"/>
<dbReference type="PhylomeDB" id="Q9K3V1"/>
<dbReference type="Proteomes" id="UP000001973">
    <property type="component" value="Chromosome"/>
</dbReference>
<dbReference type="GO" id="GO:0005829">
    <property type="term" value="C:cytosol"/>
    <property type="evidence" value="ECO:0000318"/>
    <property type="project" value="GO_Central"/>
</dbReference>
<dbReference type="GO" id="GO:0097367">
    <property type="term" value="F:carbohydrate derivative binding"/>
    <property type="evidence" value="ECO:0007669"/>
    <property type="project" value="InterPro"/>
</dbReference>
<dbReference type="GO" id="GO:0008968">
    <property type="term" value="F:D-sedoheptulose 7-phosphate isomerase activity"/>
    <property type="evidence" value="ECO:0000318"/>
    <property type="project" value="GO_Central"/>
</dbReference>
<dbReference type="GO" id="GO:2001061">
    <property type="term" value="P:D-glycero-D-manno-heptose 7-phosphate biosynthetic process"/>
    <property type="evidence" value="ECO:0000318"/>
    <property type="project" value="GO_Central"/>
</dbReference>
<dbReference type="CDD" id="cd05013">
    <property type="entry name" value="SIS_RpiR"/>
    <property type="match status" value="1"/>
</dbReference>
<dbReference type="Gene3D" id="3.40.50.10490">
    <property type="entry name" value="Glucose-6-phosphate isomerase like protein, domain 1"/>
    <property type="match status" value="1"/>
</dbReference>
<dbReference type="HAMAP" id="MF_01240">
    <property type="entry name" value="UPF0309"/>
    <property type="match status" value="1"/>
</dbReference>
<dbReference type="InterPro" id="IPR035472">
    <property type="entry name" value="RpiR-like_SIS"/>
</dbReference>
<dbReference type="InterPro" id="IPR001347">
    <property type="entry name" value="SIS_dom"/>
</dbReference>
<dbReference type="InterPro" id="IPR046348">
    <property type="entry name" value="SIS_dom_sf"/>
</dbReference>
<dbReference type="InterPro" id="IPR050099">
    <property type="entry name" value="SIS_GmhA/DiaA_subfam"/>
</dbReference>
<dbReference type="InterPro" id="IPR022951">
    <property type="entry name" value="UPF0309"/>
</dbReference>
<dbReference type="NCBIfam" id="NF002805">
    <property type="entry name" value="PRK02947.1"/>
    <property type="match status" value="1"/>
</dbReference>
<dbReference type="PANTHER" id="PTHR30390:SF7">
    <property type="entry name" value="PHOSPHOHEPTOSE ISOMERASE"/>
    <property type="match status" value="1"/>
</dbReference>
<dbReference type="PANTHER" id="PTHR30390">
    <property type="entry name" value="SEDOHEPTULOSE 7-PHOSPHATE ISOMERASE / DNAA INITIATOR-ASSOCIATING FACTOR FOR REPLICATION INITIATION"/>
    <property type="match status" value="1"/>
</dbReference>
<dbReference type="Pfam" id="PF13580">
    <property type="entry name" value="SIS_2"/>
    <property type="match status" value="1"/>
</dbReference>
<dbReference type="SUPFAM" id="SSF53697">
    <property type="entry name" value="SIS domain"/>
    <property type="match status" value="1"/>
</dbReference>
<dbReference type="PROSITE" id="PS51464">
    <property type="entry name" value="SIS"/>
    <property type="match status" value="1"/>
</dbReference>